<name>NTPPB_NEIMB</name>
<feature type="chain" id="PRO_0000123034" description="7-methyl-GTP pyrophosphatase">
    <location>
        <begin position="1"/>
        <end position="196"/>
    </location>
</feature>
<feature type="active site" description="Proton acceptor" evidence="1">
    <location>
        <position position="72"/>
    </location>
</feature>
<feature type="site" description="Important for substrate specificity" evidence="1">
    <location>
        <position position="15"/>
    </location>
</feature>
<feature type="site" description="Important for substrate specificity" evidence="1">
    <location>
        <position position="73"/>
    </location>
</feature>
<feature type="site" description="Important for substrate specificity" evidence="1">
    <location>
        <position position="158"/>
    </location>
</feature>
<organism>
    <name type="scientific">Neisseria meningitidis serogroup B (strain ATCC BAA-335 / MC58)</name>
    <dbReference type="NCBI Taxonomy" id="122586"/>
    <lineage>
        <taxon>Bacteria</taxon>
        <taxon>Pseudomonadati</taxon>
        <taxon>Pseudomonadota</taxon>
        <taxon>Betaproteobacteria</taxon>
        <taxon>Neisseriales</taxon>
        <taxon>Neisseriaceae</taxon>
        <taxon>Neisseria</taxon>
    </lineage>
</organism>
<comment type="function">
    <text evidence="1">Nucleoside triphosphate pyrophosphatase that hydrolyzes 7-methyl-GTP (m(7)GTP). May have a dual role in cell division arrest and in preventing the incorporation of modified nucleotides into cellular nucleic acids.</text>
</comment>
<comment type="catalytic activity">
    <reaction evidence="1">
        <text>N(7)-methyl-GTP + H2O = N(7)-methyl-GMP + diphosphate + H(+)</text>
        <dbReference type="Rhea" id="RHEA:58744"/>
        <dbReference type="ChEBI" id="CHEBI:15377"/>
        <dbReference type="ChEBI" id="CHEBI:15378"/>
        <dbReference type="ChEBI" id="CHEBI:33019"/>
        <dbReference type="ChEBI" id="CHEBI:58285"/>
        <dbReference type="ChEBI" id="CHEBI:87133"/>
    </reaction>
</comment>
<comment type="cofactor">
    <cofactor evidence="1">
        <name>a divalent metal cation</name>
        <dbReference type="ChEBI" id="CHEBI:60240"/>
    </cofactor>
</comment>
<comment type="subcellular location">
    <subcellularLocation>
        <location evidence="1">Cytoplasm</location>
    </subcellularLocation>
</comment>
<comment type="similarity">
    <text evidence="1">Belongs to the Maf family. YceF subfamily.</text>
</comment>
<proteinExistence type="inferred from homology"/>
<reference key="1">
    <citation type="journal article" date="2000" name="Science">
        <title>Complete genome sequence of Neisseria meningitidis serogroup B strain MC58.</title>
        <authorList>
            <person name="Tettelin H."/>
            <person name="Saunders N.J."/>
            <person name="Heidelberg J.F."/>
            <person name="Jeffries A.C."/>
            <person name="Nelson K.E."/>
            <person name="Eisen J.A."/>
            <person name="Ketchum K.A."/>
            <person name="Hood D.W."/>
            <person name="Peden J.F."/>
            <person name="Dodson R.J."/>
            <person name="Nelson W.C."/>
            <person name="Gwinn M.L."/>
            <person name="DeBoy R.T."/>
            <person name="Peterson J.D."/>
            <person name="Hickey E.K."/>
            <person name="Haft D.H."/>
            <person name="Salzberg S.L."/>
            <person name="White O."/>
            <person name="Fleischmann R.D."/>
            <person name="Dougherty B.A."/>
            <person name="Mason T.M."/>
            <person name="Ciecko A."/>
            <person name="Parksey D.S."/>
            <person name="Blair E."/>
            <person name="Cittone H."/>
            <person name="Clark E.B."/>
            <person name="Cotton M.D."/>
            <person name="Utterback T.R."/>
            <person name="Khouri H.M."/>
            <person name="Qin H."/>
            <person name="Vamathevan J.J."/>
            <person name="Gill J."/>
            <person name="Scarlato V."/>
            <person name="Masignani V."/>
            <person name="Pizza M."/>
            <person name="Grandi G."/>
            <person name="Sun L."/>
            <person name="Smith H.O."/>
            <person name="Fraser C.M."/>
            <person name="Moxon E.R."/>
            <person name="Rappuoli R."/>
            <person name="Venter J.C."/>
        </authorList>
    </citation>
    <scope>NUCLEOTIDE SEQUENCE [LARGE SCALE GENOMIC DNA]</scope>
    <source>
        <strain>ATCC BAA-335 / MC58</strain>
    </source>
</reference>
<accession>Q9JXS2</accession>
<keyword id="KW-0963">Cytoplasm</keyword>
<keyword id="KW-0378">Hydrolase</keyword>
<keyword id="KW-0546">Nucleotide metabolism</keyword>
<keyword id="KW-1185">Reference proteome</keyword>
<protein>
    <recommendedName>
        <fullName evidence="1">7-methyl-GTP pyrophosphatase</fullName>
        <shortName evidence="1">m(7)GTP pyrophosphatase</shortName>
        <ecNumber evidence="1">3.6.1.-</ecNumber>
    </recommendedName>
</protein>
<gene>
    <name type="ordered locus">NMB1909</name>
</gene>
<evidence type="ECO:0000255" key="1">
    <source>
        <dbReference type="HAMAP-Rule" id="MF_00528"/>
    </source>
</evidence>
<sequence length="196" mass="21911">MGLELPLILGTSSVFRREQMERLGIAFQAASPDFDETPMLGESAPQTALRLAEGKARSLTGRFPEALIVGADQVAWCDGRQWGKPMNLANAQKMLMHLSGREIEFYSAIVLLNTVTGRMRRHIDKTVVVMRQLDELHILRYLEREPDAVYCSCALKSEDLGALLIERIESTDPNALIGLPVFRLVDFLKNEGVEVL</sequence>
<dbReference type="EC" id="3.6.1.-" evidence="1"/>
<dbReference type="EMBL" id="AE002098">
    <property type="protein sequence ID" value="AAF42239.1"/>
    <property type="molecule type" value="Genomic_DNA"/>
</dbReference>
<dbReference type="PIR" id="D81028">
    <property type="entry name" value="D81028"/>
</dbReference>
<dbReference type="RefSeq" id="NP_274903.1">
    <property type="nucleotide sequence ID" value="NC_003112.2"/>
</dbReference>
<dbReference type="RefSeq" id="WP_002221554.1">
    <property type="nucleotide sequence ID" value="NC_003112.2"/>
</dbReference>
<dbReference type="SMR" id="Q9JXS2"/>
<dbReference type="FunCoup" id="Q9JXS2">
    <property type="interactions" value="86"/>
</dbReference>
<dbReference type="STRING" id="122586.NMB1909"/>
<dbReference type="PaxDb" id="122586-NMB1909"/>
<dbReference type="KEGG" id="nme:NMB1909"/>
<dbReference type="PATRIC" id="fig|122586.8.peg.2435"/>
<dbReference type="HOGENOM" id="CLU_040416_1_0_4"/>
<dbReference type="InParanoid" id="Q9JXS2"/>
<dbReference type="OrthoDB" id="9813694at2"/>
<dbReference type="Proteomes" id="UP000000425">
    <property type="component" value="Chromosome"/>
</dbReference>
<dbReference type="GO" id="GO:0005737">
    <property type="term" value="C:cytoplasm"/>
    <property type="evidence" value="ECO:0007669"/>
    <property type="project" value="UniProtKB-SubCell"/>
</dbReference>
<dbReference type="GO" id="GO:0047429">
    <property type="term" value="F:nucleoside triphosphate diphosphatase activity"/>
    <property type="evidence" value="ECO:0000318"/>
    <property type="project" value="GO_Central"/>
</dbReference>
<dbReference type="GO" id="GO:0009117">
    <property type="term" value="P:nucleotide metabolic process"/>
    <property type="evidence" value="ECO:0007669"/>
    <property type="project" value="UniProtKB-KW"/>
</dbReference>
<dbReference type="CDD" id="cd00555">
    <property type="entry name" value="Maf"/>
    <property type="match status" value="1"/>
</dbReference>
<dbReference type="FunFam" id="3.90.950.10:FF:000015">
    <property type="entry name" value="7-methyl-GTP pyrophosphatase"/>
    <property type="match status" value="1"/>
</dbReference>
<dbReference type="Gene3D" id="3.90.950.10">
    <property type="match status" value="1"/>
</dbReference>
<dbReference type="HAMAP" id="MF_00528">
    <property type="entry name" value="Maf"/>
    <property type="match status" value="1"/>
</dbReference>
<dbReference type="InterPro" id="IPR029001">
    <property type="entry name" value="ITPase-like_fam"/>
</dbReference>
<dbReference type="InterPro" id="IPR003697">
    <property type="entry name" value="Maf-like"/>
</dbReference>
<dbReference type="NCBIfam" id="TIGR00172">
    <property type="entry name" value="maf"/>
    <property type="match status" value="1"/>
</dbReference>
<dbReference type="PANTHER" id="PTHR43213">
    <property type="entry name" value="BIFUNCTIONAL DTTP/UTP PYROPHOSPHATASE/METHYLTRANSFERASE PROTEIN-RELATED"/>
    <property type="match status" value="1"/>
</dbReference>
<dbReference type="PANTHER" id="PTHR43213:SF5">
    <property type="entry name" value="BIFUNCTIONAL DTTP_UTP PYROPHOSPHATASE_METHYLTRANSFERASE PROTEIN-RELATED"/>
    <property type="match status" value="1"/>
</dbReference>
<dbReference type="Pfam" id="PF02545">
    <property type="entry name" value="Maf"/>
    <property type="match status" value="1"/>
</dbReference>
<dbReference type="PIRSF" id="PIRSF006305">
    <property type="entry name" value="Maf"/>
    <property type="match status" value="1"/>
</dbReference>
<dbReference type="SUPFAM" id="SSF52972">
    <property type="entry name" value="ITPase-like"/>
    <property type="match status" value="1"/>
</dbReference>